<sequence length="759" mass="86095">MERIKELRNLMSQSRTREILTKTTVDHMAIIKKYTSGRQEKNPALRMKWMMAMKYPITADKRITEMIPERNEQGQTLWSKMNDAGSDRVMVSPLAVTWWNRNGPITNTVHYPKIYKTYFERVERLKHGTFGPVHFRNQVKIRRRVDINPGHADLSAKEAQDVIMEVVFPNEVGARILTSESQLTITKEKKEELQDCKISPLMVAYMLERELVRKTRFLPVAGGTSSVYIEVLHLTQGTCWEQMYTPGGEVRNDDVDQSLIIAARNIVRRAAVSADPLASLLEMCHSTQIGGIRMVDILRQNPTEEQAVDICKAAMGLRISSSFSFGGFTFKRTSGSSVKREEEVLTGNLQTLKIRVHEGYEEFTMVGRRATAILRKATRRLIQLIVSGRDEQSIAEAIIVAMVFSQEDCMIKAVRGDLNFVNRANQRLNPMHQLLRHFQKDAKVLFQNWGVEPIDNVMGMIGILPDMTPSIEMSMRGVRISKMGVDEYSSTERVVVSIDRFLRIRDQRGNVLLSPEEVSETQGTEKLTITYSSSMMWEINGPESVLVNTYQWIIRNWETVKIQWSQNPTMLYNKMEFEPFQSLVPKAIRGQYSGFVRTLFQQMRDVLGTFDTAQIIKLLPFAAAPPKQSRMQFSSFTVNVRGSGMRILVRGNSPVFNYNKATKRLTVLGKDAGTLTEDPDEGTAGVESAVLRGFLILGKEDKRYGPALSINELSNLAKGEKANVLIGQGDVVLVMKRKRDSSILTDSQTATKRIRMAIN</sequence>
<dbReference type="EMBL" id="V00603">
    <property type="protein sequence ID" value="CAA23855.1"/>
    <property type="molecule type" value="Unassigned_RNA"/>
</dbReference>
<dbReference type="EMBL" id="AF389115">
    <property type="protein sequence ID" value="AAM75155.1"/>
    <property type="molecule type" value="Genomic_RNA"/>
</dbReference>
<dbReference type="EMBL" id="EF467818">
    <property type="protein sequence ID" value="ABO21705.1"/>
    <property type="molecule type" value="Genomic_RNA"/>
</dbReference>
<dbReference type="EMBL" id="CY009451">
    <property type="protein sequence ID" value="ABD77685.1"/>
    <property type="molecule type" value="Genomic_RNA"/>
</dbReference>
<dbReference type="RefSeq" id="NP_040987.1">
    <property type="nucleotide sequence ID" value="NC_002023.1"/>
</dbReference>
<dbReference type="PDB" id="2ZTT">
    <property type="method" value="X-ray"/>
    <property type="resolution" value="2.10 A"/>
    <property type="chains" value="B/D=1-37"/>
</dbReference>
<dbReference type="PDB" id="3A1G">
    <property type="method" value="X-ray"/>
    <property type="resolution" value="1.70 A"/>
    <property type="chains" value="B/D=1-37"/>
</dbReference>
<dbReference type="PDB" id="3CW4">
    <property type="method" value="X-ray"/>
    <property type="resolution" value="2.70 A"/>
    <property type="chains" value="A=535-759"/>
</dbReference>
<dbReference type="PDB" id="3WI0">
    <property type="method" value="X-ray"/>
    <property type="resolution" value="2.00 A"/>
    <property type="chains" value="A=318-484"/>
</dbReference>
<dbReference type="PDB" id="3WI1">
    <property type="method" value="X-ray"/>
    <property type="resolution" value="1.93 A"/>
    <property type="chains" value="A=318-484"/>
</dbReference>
<dbReference type="PDB" id="4ENF">
    <property type="method" value="X-ray"/>
    <property type="resolution" value="1.32 A"/>
    <property type="chains" value="A=318-483"/>
</dbReference>
<dbReference type="PDB" id="4J2R">
    <property type="method" value="X-ray"/>
    <property type="resolution" value="2.42 A"/>
    <property type="chains" value="A/B=318-484"/>
</dbReference>
<dbReference type="PDB" id="4U6O">
    <property type="method" value="X-ray"/>
    <property type="resolution" value="1.30 A"/>
    <property type="chains" value="A/B=318-483"/>
</dbReference>
<dbReference type="PDB" id="7JYW">
    <property type="method" value="X-ray"/>
    <property type="resolution" value="2.90 A"/>
    <property type="chains" value="C=549-557"/>
</dbReference>
<dbReference type="PDB" id="7JYX">
    <property type="method" value="X-ray"/>
    <property type="resolution" value="2.95 A"/>
    <property type="chains" value="C/F=549-559"/>
</dbReference>
<dbReference type="PDBsum" id="2ZTT"/>
<dbReference type="PDBsum" id="3A1G"/>
<dbReference type="PDBsum" id="3CW4"/>
<dbReference type="PDBsum" id="3WI0"/>
<dbReference type="PDBsum" id="3WI1"/>
<dbReference type="PDBsum" id="4ENF"/>
<dbReference type="PDBsum" id="4J2R"/>
<dbReference type="PDBsum" id="4U6O"/>
<dbReference type="PDBsum" id="7JYW"/>
<dbReference type="PDBsum" id="7JYX"/>
<dbReference type="SMR" id="P03428"/>
<dbReference type="DIP" id="DIP-43997N"/>
<dbReference type="IntAct" id="P03428">
    <property type="interactions" value="172"/>
</dbReference>
<dbReference type="MINT" id="P03428"/>
<dbReference type="BindingDB" id="P03428"/>
<dbReference type="ChEMBL" id="CHEMBL3317339"/>
<dbReference type="GeneID" id="956536"/>
<dbReference type="KEGG" id="vg:956536"/>
<dbReference type="OrthoDB" id="431at10239"/>
<dbReference type="Reactome" id="R-HSA-168255">
    <property type="pathway name" value="Influenza Infection"/>
</dbReference>
<dbReference type="Reactome" id="R-HSA-168271">
    <property type="pathway name" value="Transport of Ribonucleoproteins into the Host Nucleus"/>
</dbReference>
<dbReference type="Reactome" id="R-HSA-168275">
    <property type="pathway name" value="Entry of Influenza Virion into Host Cell via Endocytosis"/>
</dbReference>
<dbReference type="Reactome" id="R-HSA-168288">
    <property type="pathway name" value="Fusion of the Influenza Virion to the Host Cell Endosome"/>
</dbReference>
<dbReference type="Reactome" id="R-HSA-168298">
    <property type="pathway name" value="Release"/>
</dbReference>
<dbReference type="Reactome" id="R-HSA-168302">
    <property type="pathway name" value="Budding"/>
</dbReference>
<dbReference type="Reactome" id="R-HSA-168303">
    <property type="pathway name" value="Packaging of Eight RNA Segments"/>
</dbReference>
<dbReference type="Reactome" id="R-HSA-168325">
    <property type="pathway name" value="Viral Messenger RNA Synthesis"/>
</dbReference>
<dbReference type="Reactome" id="R-HSA-168330">
    <property type="pathway name" value="Viral RNP Complexes in the Host Cell Nucleus"/>
</dbReference>
<dbReference type="Reactome" id="R-HSA-168333">
    <property type="pathway name" value="NEP/NS2 Interacts with the Cellular Export Machinery"/>
</dbReference>
<dbReference type="Reactome" id="R-HSA-168336">
    <property type="pathway name" value="Uncoating of the Influenza Virion"/>
</dbReference>
<dbReference type="Reactome" id="R-HSA-192814">
    <property type="pathway name" value="vRNA Synthesis"/>
</dbReference>
<dbReference type="Reactome" id="R-HSA-192823">
    <property type="pathway name" value="Viral mRNA Translation"/>
</dbReference>
<dbReference type="Reactome" id="R-HSA-192869">
    <property type="pathway name" value="cRNA Synthesis"/>
</dbReference>
<dbReference type="Reactome" id="R-HSA-192905">
    <property type="pathway name" value="vRNP Assembly"/>
</dbReference>
<dbReference type="EvolutionaryTrace" id="P03428"/>
<dbReference type="PRO" id="PR:P03428"/>
<dbReference type="Proteomes" id="UP000009255">
    <property type="component" value="Genome"/>
</dbReference>
<dbReference type="Proteomes" id="UP000116373">
    <property type="component" value="Genome"/>
</dbReference>
<dbReference type="Proteomes" id="UP000170967">
    <property type="component" value="Genome"/>
</dbReference>
<dbReference type="GO" id="GO:0005576">
    <property type="term" value="C:extracellular region"/>
    <property type="evidence" value="ECO:0000304"/>
    <property type="project" value="Reactome"/>
</dbReference>
<dbReference type="GO" id="GO:0033650">
    <property type="term" value="C:host cell mitochondrion"/>
    <property type="evidence" value="ECO:0007669"/>
    <property type="project" value="UniProtKB-SubCell"/>
</dbReference>
<dbReference type="GO" id="GO:0042025">
    <property type="term" value="C:host cell nucleus"/>
    <property type="evidence" value="ECO:0007669"/>
    <property type="project" value="UniProtKB-SubCell"/>
</dbReference>
<dbReference type="GO" id="GO:0044423">
    <property type="term" value="C:virion component"/>
    <property type="evidence" value="ECO:0007669"/>
    <property type="project" value="UniProtKB-UniRule"/>
</dbReference>
<dbReference type="GO" id="GO:0003723">
    <property type="term" value="F:RNA binding"/>
    <property type="evidence" value="ECO:0007669"/>
    <property type="project" value="UniProtKB-UniRule"/>
</dbReference>
<dbReference type="GO" id="GO:0003968">
    <property type="term" value="F:RNA-directed RNA polymerase activity"/>
    <property type="evidence" value="ECO:0007669"/>
    <property type="project" value="UniProtKB-UniRule"/>
</dbReference>
<dbReference type="GO" id="GO:0006370">
    <property type="term" value="P:7-methylguanosine mRNA capping"/>
    <property type="evidence" value="ECO:0007669"/>
    <property type="project" value="UniProtKB-UniRule"/>
</dbReference>
<dbReference type="GO" id="GO:0075526">
    <property type="term" value="P:cap snatching"/>
    <property type="evidence" value="ECO:0007669"/>
    <property type="project" value="UniProtKB-UniRule"/>
</dbReference>
<dbReference type="GO" id="GO:0006351">
    <property type="term" value="P:DNA-templated transcription"/>
    <property type="evidence" value="ECO:0007669"/>
    <property type="project" value="UniProtKB-UniRule"/>
</dbReference>
<dbReference type="GO" id="GO:0039545">
    <property type="term" value="P:symbiont-mediated suppression of host cytoplasmic pattern recognition receptor signaling pathway via inhibition of MAVS activity"/>
    <property type="evidence" value="ECO:0007669"/>
    <property type="project" value="UniProtKB-UniRule"/>
</dbReference>
<dbReference type="GO" id="GO:0039657">
    <property type="term" value="P:symbiont-mediated suppression of host gene expression"/>
    <property type="evidence" value="ECO:0007669"/>
    <property type="project" value="UniProtKB-KW"/>
</dbReference>
<dbReference type="GO" id="GO:0039523">
    <property type="term" value="P:symbiont-mediated suppression of host mRNA transcription via inhibition of RNA polymerase II activity"/>
    <property type="evidence" value="ECO:0007669"/>
    <property type="project" value="UniProtKB-UniRule"/>
</dbReference>
<dbReference type="GO" id="GO:0039694">
    <property type="term" value="P:viral RNA genome replication"/>
    <property type="evidence" value="ECO:0007669"/>
    <property type="project" value="InterPro"/>
</dbReference>
<dbReference type="FunFam" id="3.30.30.90:FF:000001">
    <property type="entry name" value="Polymerase basic protein 2"/>
    <property type="match status" value="1"/>
</dbReference>
<dbReference type="Gene3D" id="3.30.30.90">
    <property type="entry name" value="Polymerase Basic Protein 2, C-terminal domain"/>
    <property type="match status" value="1"/>
</dbReference>
<dbReference type="HAMAP" id="MF_04062">
    <property type="entry name" value="INV_PB2"/>
    <property type="match status" value="1"/>
</dbReference>
<dbReference type="InterPro" id="IPR049110">
    <property type="entry name" value="Flu_PB2_2nd"/>
</dbReference>
<dbReference type="InterPro" id="IPR049114">
    <property type="entry name" value="Flu_PB2_6th"/>
</dbReference>
<dbReference type="InterPro" id="IPR049115">
    <property type="entry name" value="Flu_PB2_C"/>
</dbReference>
<dbReference type="InterPro" id="IPR048298">
    <property type="entry name" value="Flu_PB2_CAP-bd"/>
</dbReference>
<dbReference type="InterPro" id="IPR049111">
    <property type="entry name" value="Flu_PB2_middle"/>
</dbReference>
<dbReference type="InterPro" id="IPR049106">
    <property type="entry name" value="Flu_PB2_N"/>
</dbReference>
<dbReference type="InterPro" id="IPR001591">
    <property type="entry name" value="INV_PB2"/>
</dbReference>
<dbReference type="InterPro" id="IPR049113">
    <property type="entry name" value="PB2_helical"/>
</dbReference>
<dbReference type="InterPro" id="IPR037258">
    <property type="entry name" value="PDB2_C"/>
</dbReference>
<dbReference type="Pfam" id="PF20947">
    <property type="entry name" value="Flu_PB2_1st"/>
    <property type="match status" value="1"/>
</dbReference>
<dbReference type="Pfam" id="PF20948">
    <property type="entry name" value="Flu_PB2_2nd"/>
    <property type="match status" value="1"/>
</dbReference>
<dbReference type="Pfam" id="PF20949">
    <property type="entry name" value="Flu_PB2_3rd"/>
    <property type="match status" value="1"/>
</dbReference>
<dbReference type="Pfam" id="PF20950">
    <property type="entry name" value="Flu_PB2_4th"/>
    <property type="match status" value="1"/>
</dbReference>
<dbReference type="Pfam" id="PF00604">
    <property type="entry name" value="Flu_PB2_5th"/>
    <property type="match status" value="1"/>
</dbReference>
<dbReference type="Pfam" id="PF20951">
    <property type="entry name" value="Flu_PB2_6th"/>
    <property type="match status" value="1"/>
</dbReference>
<dbReference type="Pfam" id="PF20952">
    <property type="entry name" value="Flu_PB2_7th"/>
    <property type="match status" value="1"/>
</dbReference>
<dbReference type="SUPFAM" id="SSF160453">
    <property type="entry name" value="PB2 C-terminal domain-like"/>
    <property type="match status" value="1"/>
</dbReference>
<gene>
    <name evidence="2" type="primary">PB2</name>
</gene>
<reference key="1">
    <citation type="journal article" date="1982" name="Cell">
        <title>Nucleotide sequences of influenza virus segments 1 and 3 reveal mosaic structure of a small viral RNA segment.</title>
        <authorList>
            <person name="Fields S."/>
            <person name="Winter G."/>
        </authorList>
    </citation>
    <scope>NUCLEOTIDE SEQUENCE [GENOMIC RNA]</scope>
</reference>
<reference key="2">
    <citation type="journal article" date="2001" name="Philos. Trans. R. Soc. Lond., B, Biol. Sci.">
        <title>Plasmid-only rescue of influenza A virus vaccine candidates.</title>
        <authorList>
            <person name="Schickli J.H."/>
            <person name="Flandorfer A."/>
            <person name="Nakaya T."/>
            <person name="Martinez-Sobrido L."/>
            <person name="Garcia-Sastre A."/>
            <person name="Palese P."/>
        </authorList>
    </citation>
    <scope>NUCLEOTIDE SEQUENCE [GENOMIC RNA]</scope>
</reference>
<reference key="3">
    <citation type="journal article" date="2004" name="Virus Res.">
        <title>Efficient generation and growth of influenza virus A/PR/8/34 from eight cDNA fragments.</title>
        <authorList>
            <person name="de Wit E."/>
            <person name="Spronken M.I.J."/>
            <person name="Bestebroer T.M."/>
            <person name="Rimmelzwaan G.F."/>
            <person name="Osterhaus A.D.M.E."/>
            <person name="Fouchier R.A.M."/>
        </authorList>
    </citation>
    <scope>NUCLEOTIDE SEQUENCE [GENOMIC RNA]</scope>
    <scope>REVERSE GENETICS</scope>
</reference>
<reference key="4">
    <citation type="submission" date="2006-03" db="EMBL/GenBank/DDBJ databases">
        <title>The NIAID influenza genome sequencing project.</title>
        <authorList>
            <person name="Ghedin E."/>
            <person name="Spiro D."/>
            <person name="Miller N."/>
            <person name="Zaborsky J."/>
            <person name="Feldblyum T."/>
            <person name="Subbu V."/>
            <person name="Shumway M."/>
            <person name="Sparenborg J."/>
            <person name="Groveman L."/>
            <person name="Halpin R."/>
            <person name="Sitz J."/>
            <person name="Koo H."/>
            <person name="Salzberg S.L."/>
            <person name="Webster R.G."/>
            <person name="Hoffmann E."/>
            <person name="Krauss S."/>
            <person name="Naeve C."/>
            <person name="Bao Y."/>
            <person name="Bolotov P."/>
            <person name="Dernovoy D."/>
            <person name="Kiryutin B."/>
            <person name="Lipman D.J."/>
            <person name="Tatusova T."/>
        </authorList>
    </citation>
    <scope>NUCLEOTIDE SEQUENCE [GENOMIC RNA]</scope>
</reference>
<reference key="5">
    <citation type="journal article" date="2004" name="J. Virol.">
        <title>The PA subunit is required for efficient nuclear accumulation of the PB1 subunit of the influenza A virus RNA polymerase complex.</title>
        <authorList>
            <person name="Fodor E."/>
            <person name="Smith M."/>
        </authorList>
    </citation>
    <scope>SUBCELLULAR LOCATION</scope>
    <source>
        <strain>A/WSN/33</strain>
    </source>
</reference>
<reference key="6">
    <citation type="journal article" date="2006" name="Virology">
        <title>Characterization of a mitochondrial-targeting signal in the PB2 protein of influenza viruses.</title>
        <authorList>
            <person name="Carr S.M."/>
            <person name="Carnero E."/>
            <person name="Garcia-Sastre A."/>
            <person name="Brownlee G.G."/>
            <person name="Fodor E."/>
        </authorList>
    </citation>
    <scope>FUNCTION</scope>
    <scope>SUBCELLULAR LOCATION</scope>
    <source>
        <strain>A/WSN/33</strain>
    </source>
</reference>
<reference key="7">
    <citation type="journal article" date="2006" name="J. Gen. Virol.">
        <title>Role of the influenza virus heterotrimeric RNA polymerase complex in the initiation of replication.</title>
        <authorList>
            <person name="Deng T."/>
            <person name="Sharps J.L."/>
            <person name="Brownlee G.G."/>
        </authorList>
    </citation>
    <scope>FUNCTION</scope>
</reference>
<reference key="8">
    <citation type="journal article" date="2010" name="J. Virol.">
        <title>The PB2 subunit of the influenza virus RNA polymerase affects virulence by interacting with the mitochondrial antiviral signaling protein and inhibiting expression of beta interferon.</title>
        <authorList>
            <person name="Graef K.M."/>
            <person name="Vreede F.T."/>
            <person name="Lau Y.F."/>
            <person name="McCall A.W."/>
            <person name="Carr S.M."/>
            <person name="Subbarao K."/>
            <person name="Fodor E."/>
        </authorList>
    </citation>
    <scope>FUNCTION</scope>
    <scope>INTERACTION WITH HOST MAVS</scope>
    <scope>SUBCELLULAR LOCATION</scope>
</reference>
<reference key="9">
    <citation type="journal article" date="2012" name="PLoS ONE">
        <title>Influenza polymerase activity correlates with the strength of interaction between nucleoprotein and PB2 through the host-specific residue K/E627.</title>
        <authorList>
            <person name="Ng A.K."/>
            <person name="Chan W.H."/>
            <person name="Choi S.T."/>
            <person name="Lam M.K."/>
            <person name="Lau K.F."/>
            <person name="Chan P.K."/>
            <person name="Au S.W."/>
            <person name="Fodor E."/>
            <person name="Shaw P.C."/>
        </authorList>
    </citation>
    <scope>FUNCTION</scope>
    <scope>INTERACTION WITH NUCLEOPROTEIN NP</scope>
</reference>
<reference key="10">
    <citation type="journal article" date="2013" name="Virus Res.">
        <title>Influenza A polymerase subunit PB2 possesses overlapping binding sites for polymerase subunit PB1 and human MAVS proteins.</title>
        <authorList>
            <person name="Patel D."/>
            <person name="Schultz L.W."/>
            <person name="Umland T.C."/>
        </authorList>
    </citation>
    <scope>FUNCTION</scope>
    <scope>INTERACTION WITH HOST MAVS</scope>
    <source>
        <strain>A/WSN/33</strain>
    </source>
</reference>
<reference key="11">
    <citation type="journal article" date="2014" name="Virology">
        <title>An important amino acid in nucleoprotein contributes to influenza A virus replication by interacting with polymerase PB2.</title>
        <authorList>
            <person name="Gui X."/>
            <person name="Li R."/>
            <person name="Zhang X."/>
            <person name="Shen C."/>
            <person name="Yu H."/>
            <person name="Guo X."/>
            <person name="Kang Y."/>
            <person name="Chen J."/>
            <person name="Chen H."/>
            <person name="Chen Y."/>
            <person name="Xia N."/>
        </authorList>
    </citation>
    <scope>FUNCTION</scope>
    <scope>INTERACTION WITH NUCLEOPROTEIN NP</scope>
    <source>
        <strain>A/WSN/193</strain>
    </source>
</reference>
<reference key="12">
    <citation type="journal article" date="2017" name="Nat. Commun.">
        <title>Comparative influenza protein interactomes identify the role of plakophilin 2 in virus restriction.</title>
        <authorList>
            <person name="Wang L."/>
            <person name="Fu B."/>
            <person name="Li W."/>
            <person name="Patil G."/>
            <person name="Liu L."/>
            <person name="Dorf M.E."/>
            <person name="Li S."/>
        </authorList>
    </citation>
    <scope>INTERACTION WITH PB1</scope>
</reference>
<reference key="13">
    <citation type="journal article" date="2009" name="J. Biol. Chem.">
        <title>Structural basis of the influenza A virus RNA polymerase PB2 RNA-binding domain containing the pathogenicity-determinant lysine 627 residue.</title>
        <authorList>
            <person name="Kuzuhara T."/>
            <person name="Kise D."/>
            <person name="Yoshida H."/>
            <person name="Horita T."/>
            <person name="Murazaki Y."/>
            <person name="Nishimura A."/>
            <person name="Echigo N."/>
            <person name="Utsunomiya H."/>
            <person name="Tsuge H."/>
        </authorList>
    </citation>
    <scope>X-RAY CRYSTALLOGRAPHY (2.70 ANGSTROMS) OF 535-759</scope>
</reference>
<reference key="14">
    <citation type="journal article" date="2013" name="J. Biol. Chem.">
        <title>Structural and functional characterization of K339T substitution identified in the PB2 subunit cap-binding pocket of influenza A virus.</title>
        <authorList>
            <person name="Liu Y."/>
            <person name="Qin K."/>
            <person name="Meng G."/>
            <person name="Zhang J."/>
            <person name="Zhou J."/>
            <person name="Zhao G."/>
            <person name="Luo M."/>
            <person name="Zheng X."/>
        </authorList>
    </citation>
    <scope>X-RAY CRYSTALLOGRAPHY (1.32 ANGSTROMS) OF 318-483</scope>
</reference>
<reference key="15">
    <citation type="journal article" date="2013" name="PLoS ONE">
        <title>Conformational polymorphism of m7GTP in crystal structure of the PB2 middle domain from human influenza A virus.</title>
        <authorList>
            <person name="Tsurumura T."/>
            <person name="Qiu H."/>
            <person name="Yoshida T."/>
            <person name="Tsumori Y."/>
            <person name="Hatakeyama D."/>
            <person name="Kuzuhara T."/>
            <person name="Tsuge H."/>
        </authorList>
    </citation>
    <scope>X-RAY CRYSTALLOGRAPHY (1.93 ANGSTROMS) OF 318-484</scope>
</reference>
<reference key="16">
    <citation type="journal article" date="2014" name="Acta Crystallogr. F">
        <title>Crystallization and preliminary X-ray diffraction studies of a surface mutant of the middle domain of PB2 from human influenza A (H1N1) virus.</title>
        <authorList>
            <person name="Tsurumura T."/>
            <person name="Qiu H."/>
            <person name="Yoshida T."/>
            <person name="Tsumori Y."/>
            <person name="Tsuge H."/>
        </authorList>
    </citation>
    <scope>X-RAY CRYSTALLOGRAPHY (2.42 ANGSTROMS) OF 318-484</scope>
</reference>
<name>PB2_I34A1</name>
<accession>P03428</accession>
<accession>A4GXH0</accession>
<accession>Q20N28</accession>
<accession>Q8JUU8</accession>
<evidence type="ECO:0000250" key="1">
    <source>
        <dbReference type="UniProtKB" id="P03427"/>
    </source>
</evidence>
<evidence type="ECO:0000255" key="2">
    <source>
        <dbReference type="HAMAP-Rule" id="MF_04062"/>
    </source>
</evidence>
<evidence type="ECO:0000269" key="3">
    <source>
    </source>
</evidence>
<evidence type="ECO:0000269" key="4">
    <source>
    </source>
</evidence>
<evidence type="ECO:0000269" key="5">
    <source>
    </source>
</evidence>
<evidence type="ECO:0000269" key="6">
    <source>
    </source>
</evidence>
<evidence type="ECO:0000269" key="7">
    <source>
    </source>
</evidence>
<evidence type="ECO:0000269" key="8">
    <source>
    </source>
</evidence>
<evidence type="ECO:0000269" key="9">
    <source>
    </source>
</evidence>
<evidence type="ECO:0000269" key="10">
    <source>
    </source>
</evidence>
<evidence type="ECO:0000305" key="11"/>
<evidence type="ECO:0007829" key="12">
    <source>
        <dbReference type="PDB" id="3A1G"/>
    </source>
</evidence>
<evidence type="ECO:0007829" key="13">
    <source>
        <dbReference type="PDB" id="3CW4"/>
    </source>
</evidence>
<evidence type="ECO:0007829" key="14">
    <source>
        <dbReference type="PDB" id="4J2R"/>
    </source>
</evidence>
<evidence type="ECO:0007829" key="15">
    <source>
        <dbReference type="PDB" id="4U6O"/>
    </source>
</evidence>
<comment type="function">
    <text evidence="2 4 5 6 7 8 9">Plays an essential role in transcription initiation and cap-stealing mechanism, in which cellular capped pre-mRNAs are used to generate primers for viral transcription. Recognizes and binds the 7-methylguanosine-containing cap of the target pre-RNA which is subsequently cleaved after 10-13 nucleotides by the viral protein PA. Plays a role in the initiation of the viral genome replication and modulates the activity of the ribonucleoprotein (RNP) complex. In addition, participates in the inhibition of type I interferon induction through interaction with and inhibition of the host mitochondrial antiviral signaling protein MAVS.</text>
</comment>
<comment type="subunit">
    <text evidence="2 6 7 8 9 10">Influenza RNA polymerase is composed of three subunits: PB1, PB2 and PA. Interacts (via N-terminus) with PB1 (via C-terminus) (PubMed:28169297). Interacts with nucleoprotein NP (via N-terminus) (PubMed:22570712, PubMed:25043584). Interacts (via N-terminus) with host MAVS (via N-terminus); this interaction inhibits host innate immune response (PubMed:20538852, PubMed:23246644).</text>
</comment>
<comment type="interaction">
    <interactant intactId="EBI-2547475">
        <id>P03428</id>
    </interactant>
    <interactant intactId="EBI-2547640">
        <id>P03466</id>
        <label>NP</label>
    </interactant>
    <organismsDiffer>false</organismsDiffer>
    <experiments>3</experiments>
</comment>
<comment type="interaction">
    <interactant intactId="EBI-2547475">
        <id>P03428</id>
    </interactant>
    <interactant intactId="EBI-2547514">
        <id>P03431</id>
        <label>PB1</label>
    </interactant>
    <organismsDiffer>false</organismsDiffer>
    <experiments>3</experiments>
</comment>
<comment type="subcellular location">
    <subcellularLocation>
        <location evidence="2">Virion</location>
    </subcellularLocation>
    <subcellularLocation>
        <location evidence="2 3 6">Host nucleus</location>
    </subcellularLocation>
    <subcellularLocation>
        <location evidence="2 3 4 6">Host mitochondrion</location>
    </subcellularLocation>
</comment>
<comment type="alternative products">
    <event type="alternative splicing"/>
    <isoform>
        <id>P03428-1</id>
        <name>Polymerase basic protein 2</name>
        <sequence type="displayed"/>
    </isoform>
    <isoform>
        <id>P0DOG6-1</id>
        <name evidence="1">PB2-S1</name>
        <sequence type="external"/>
    </isoform>
</comment>
<comment type="similarity">
    <text evidence="2 11">Belongs to the influenza viruses PB2 family.</text>
</comment>
<feature type="chain" id="PRO_0000078834" description="Polymerase basic protein 2">
    <location>
        <begin position="1"/>
        <end position="759"/>
    </location>
</feature>
<feature type="short sequence motif" description="Nuclear localization signal" evidence="2">
    <location>
        <begin position="736"/>
        <end position="739"/>
    </location>
</feature>
<feature type="site" description="Mammalian adaptation" evidence="2">
    <location>
        <position position="627"/>
    </location>
</feature>
<feature type="sequence conflict" description="In Ref. 1; ABD77685." evidence="11" ref="1">
    <original>I</original>
    <variation>M</variation>
    <location>
        <position position="105"/>
    </location>
</feature>
<feature type="sequence conflict" description="In Ref. 1; ABD77685." evidence="11" ref="1">
    <original>R</original>
    <variation>K</variation>
    <location>
        <position position="251"/>
    </location>
</feature>
<feature type="sequence conflict" description="In Ref. 1; ABD77685." evidence="11" ref="1">
    <original>R</original>
    <variation>K</variation>
    <location>
        <position position="299"/>
    </location>
</feature>
<feature type="sequence conflict" description="In Ref. 1; ABD77685." evidence="11" ref="1">
    <original>D</original>
    <variation>G</variation>
    <location>
        <position position="309"/>
    </location>
</feature>
<feature type="sequence conflict" description="In Ref. 1; ABD77685." evidence="11" ref="1">
    <original>I</original>
    <variation>V</variation>
    <location>
        <position position="504"/>
    </location>
</feature>
<feature type="sequence conflict" description="In Ref. 2; ABO21705." evidence="11" ref="2">
    <original>D</original>
    <variation>N</variation>
    <location>
        <position position="701"/>
    </location>
</feature>
<feature type="sequence conflict" description="In Ref. 1; ABD77685." evidence="11" ref="1">
    <original>K</original>
    <variation>R</variation>
    <location>
        <position position="702"/>
    </location>
</feature>
<feature type="helix" evidence="12">
    <location>
        <begin position="1"/>
        <end position="10"/>
    </location>
</feature>
<feature type="helix" evidence="12">
    <location>
        <begin position="14"/>
        <end position="22"/>
    </location>
</feature>
<feature type="helix" evidence="12">
    <location>
        <begin position="27"/>
        <end position="33"/>
    </location>
</feature>
<feature type="strand" evidence="15">
    <location>
        <begin position="323"/>
        <end position="325"/>
    </location>
</feature>
<feature type="strand" evidence="15">
    <location>
        <begin position="328"/>
        <end position="335"/>
    </location>
</feature>
<feature type="strand" evidence="15">
    <location>
        <begin position="338"/>
        <end position="345"/>
    </location>
</feature>
<feature type="strand" evidence="15">
    <location>
        <begin position="351"/>
        <end position="359"/>
    </location>
</feature>
<feature type="strand" evidence="15">
    <location>
        <begin position="361"/>
        <end position="366"/>
    </location>
</feature>
<feature type="strand" evidence="15">
    <location>
        <begin position="368"/>
        <end position="377"/>
    </location>
</feature>
<feature type="strand" evidence="15">
    <location>
        <begin position="380"/>
        <end position="390"/>
    </location>
</feature>
<feature type="helix" evidence="15">
    <location>
        <begin position="391"/>
        <end position="405"/>
    </location>
</feature>
<feature type="helix" evidence="15">
    <location>
        <begin position="408"/>
        <end position="411"/>
    </location>
</feature>
<feature type="turn" evidence="15">
    <location>
        <begin position="418"/>
        <end position="420"/>
    </location>
</feature>
<feature type="helix" evidence="15">
    <location>
        <begin position="430"/>
        <end position="440"/>
    </location>
</feature>
<feature type="helix" evidence="15">
    <location>
        <begin position="443"/>
        <end position="449"/>
    </location>
</feature>
<feature type="strand" evidence="15">
    <location>
        <begin position="451"/>
        <end position="453"/>
    </location>
</feature>
<feature type="helix" evidence="14">
    <location>
        <begin position="456"/>
        <end position="458"/>
    </location>
</feature>
<feature type="strand" evidence="15">
    <location>
        <begin position="461"/>
        <end position="463"/>
    </location>
</feature>
<feature type="strand" evidence="15">
    <location>
        <begin position="469"/>
        <end position="475"/>
    </location>
</feature>
<feature type="strand" evidence="15">
    <location>
        <begin position="478"/>
        <end position="480"/>
    </location>
</feature>
<feature type="helix" evidence="13">
    <location>
        <begin position="536"/>
        <end position="540"/>
    </location>
</feature>
<feature type="helix" evidence="13">
    <location>
        <begin position="541"/>
        <end position="555"/>
    </location>
</feature>
<feature type="helix" evidence="13">
    <location>
        <begin position="557"/>
        <end position="566"/>
    </location>
</feature>
<feature type="helix" evidence="13">
    <location>
        <begin position="568"/>
        <end position="572"/>
    </location>
</feature>
<feature type="helix" evidence="13">
    <location>
        <begin position="575"/>
        <end position="577"/>
    </location>
</feature>
<feature type="helix" evidence="13">
    <location>
        <begin position="578"/>
        <end position="582"/>
    </location>
</feature>
<feature type="turn" evidence="13">
    <location>
        <begin position="586"/>
        <end position="588"/>
    </location>
</feature>
<feature type="helix" evidence="13">
    <location>
        <begin position="589"/>
        <end position="605"/>
    </location>
</feature>
<feature type="helix" evidence="13">
    <location>
        <begin position="612"/>
        <end position="618"/>
    </location>
</feature>
<feature type="helix" evidence="13">
    <location>
        <begin position="619"/>
        <end position="622"/>
    </location>
</feature>
<feature type="strand" evidence="13">
    <location>
        <begin position="634"/>
        <end position="638"/>
    </location>
</feature>
<feature type="strand" evidence="13">
    <location>
        <begin position="641"/>
        <end position="643"/>
    </location>
</feature>
<feature type="strand" evidence="13">
    <location>
        <begin position="645"/>
        <end position="651"/>
    </location>
</feature>
<feature type="strand" evidence="13">
    <location>
        <begin position="656"/>
        <end position="658"/>
    </location>
</feature>
<feature type="strand" evidence="13">
    <location>
        <begin position="660"/>
        <end position="662"/>
    </location>
</feature>
<feature type="strand" evidence="13">
    <location>
        <begin position="664"/>
        <end position="674"/>
    </location>
</feature>
<feature type="strand" evidence="13">
    <location>
        <begin position="687"/>
        <end position="691"/>
    </location>
</feature>
<feature type="strand" evidence="13">
    <location>
        <begin position="694"/>
        <end position="699"/>
    </location>
</feature>
<feature type="helix" evidence="13">
    <location>
        <begin position="702"/>
        <end position="704"/>
    </location>
</feature>
<feature type="helix" evidence="13">
    <location>
        <begin position="710"/>
        <end position="714"/>
    </location>
</feature>
<feature type="strand" evidence="13">
    <location>
        <begin position="721"/>
        <end position="727"/>
    </location>
</feature>
<feature type="strand" evidence="13">
    <location>
        <begin position="730"/>
        <end position="736"/>
    </location>
</feature>
<keyword id="KW-0002">3D-structure</keyword>
<keyword id="KW-0025">Alternative splicing</keyword>
<keyword id="KW-1157">Cap snatching</keyword>
<keyword id="KW-1262">Eukaryotic host gene expression shutoff by virus</keyword>
<keyword id="KW-1191">Eukaryotic host transcription shutoff by virus</keyword>
<keyword id="KW-1190">Host gene expression shutoff by virus</keyword>
<keyword id="KW-1045">Host mitochondrion</keyword>
<keyword id="KW-1048">Host nucleus</keyword>
<keyword id="KW-0945">Host-virus interaction</keyword>
<keyword id="KW-1090">Inhibition of host innate immune response by virus</keyword>
<keyword id="KW-1097">Inhibition of host MAVS by virus</keyword>
<keyword id="KW-1113">Inhibition of host RLR pathway by virus</keyword>
<keyword id="KW-1104">Inhibition of host RNA polymerase II by virus</keyword>
<keyword id="KW-0506">mRNA capping</keyword>
<keyword id="KW-0507">mRNA processing</keyword>
<keyword id="KW-1185">Reference proteome</keyword>
<keyword id="KW-0899">Viral immunoevasion</keyword>
<keyword id="KW-1195">Viral transcription</keyword>
<keyword id="KW-0946">Virion</keyword>
<protein>
    <recommendedName>
        <fullName evidence="2">Polymerase basic protein 2</fullName>
    </recommendedName>
    <alternativeName>
        <fullName evidence="2">RNA-directed RNA polymerase subunit P3</fullName>
    </alternativeName>
</protein>
<organismHost>
    <name type="scientific">Aves</name>
    <dbReference type="NCBI Taxonomy" id="8782"/>
</organismHost>
<organismHost>
    <name type="scientific">Homo sapiens</name>
    <name type="common">Human</name>
    <dbReference type="NCBI Taxonomy" id="9606"/>
</organismHost>
<organismHost>
    <name type="scientific">Sus scrofa</name>
    <name type="common">Pig</name>
    <dbReference type="NCBI Taxonomy" id="9823"/>
</organismHost>
<proteinExistence type="evidence at protein level"/>
<organism>
    <name type="scientific">Influenza A virus (strain A/Puerto Rico/8/1934 H1N1)</name>
    <dbReference type="NCBI Taxonomy" id="211044"/>
    <lineage>
        <taxon>Viruses</taxon>
        <taxon>Riboviria</taxon>
        <taxon>Orthornavirae</taxon>
        <taxon>Negarnaviricota</taxon>
        <taxon>Polyploviricotina</taxon>
        <taxon>Insthoviricetes</taxon>
        <taxon>Articulavirales</taxon>
        <taxon>Orthomyxoviridae</taxon>
        <taxon>Alphainfluenzavirus</taxon>
        <taxon>Alphainfluenzavirus influenzae</taxon>
        <taxon>Influenza A virus</taxon>
    </lineage>
</organism>